<feature type="transit peptide" description="Mitochondrion" evidence="3">
    <location>
        <begin position="1"/>
        <end position="46"/>
    </location>
</feature>
<feature type="chain" id="PRO_0000250738" description="Aspartate--tRNA ligase, mitochondrial">
    <location>
        <begin position="47"/>
        <end position="652"/>
    </location>
</feature>
<feature type="region of interest" description="Aspartate" evidence="1">
    <location>
        <begin position="243"/>
        <end position="246"/>
    </location>
</feature>
<feature type="binding site" evidence="1">
    <location>
        <begin position="265"/>
        <end position="267"/>
    </location>
    <ligand>
        <name>ATP</name>
        <dbReference type="ChEBI" id="CHEBI:30616"/>
    </ligand>
</feature>
<feature type="binding site" evidence="1">
    <location>
        <position position="265"/>
    </location>
    <ligand>
        <name>L-aspartate</name>
        <dbReference type="ChEBI" id="CHEBI:29991"/>
    </ligand>
</feature>
<feature type="binding site" evidence="1">
    <location>
        <position position="534"/>
    </location>
    <ligand>
        <name>ATP</name>
        <dbReference type="ChEBI" id="CHEBI:30616"/>
    </ligand>
</feature>
<feature type="binding site" evidence="1">
    <location>
        <position position="541"/>
    </location>
    <ligand>
        <name>L-aspartate</name>
        <dbReference type="ChEBI" id="CHEBI:29991"/>
    </ligand>
</feature>
<feature type="binding site" evidence="1">
    <location>
        <begin position="583"/>
        <end position="586"/>
    </location>
    <ligand>
        <name>ATP</name>
        <dbReference type="ChEBI" id="CHEBI:30616"/>
    </ligand>
</feature>
<feature type="modified residue" description="Phosphothreonine" evidence="5">
    <location>
        <position position="218"/>
    </location>
</feature>
<feature type="modified residue" description="Phosphoserine" evidence="2">
    <location>
        <position position="241"/>
    </location>
</feature>
<accession>Q3KRD0</accession>
<evidence type="ECO:0000250" key="1"/>
<evidence type="ECO:0000250" key="2">
    <source>
        <dbReference type="UniProtKB" id="Q6PI48"/>
    </source>
</evidence>
<evidence type="ECO:0000255" key="3"/>
<evidence type="ECO:0000305" key="4"/>
<evidence type="ECO:0007744" key="5">
    <source>
    </source>
</evidence>
<comment type="function">
    <text evidence="2">Catalyzes the attachment of aspartate to tRNA(Asp) in a two-step reaction: aspartate is first activated by ATP to form Asp-AMP and then transferred to the acceptor end of tRNA(Asp).</text>
</comment>
<comment type="catalytic activity">
    <reaction evidence="2">
        <text>tRNA(Asp) + L-aspartate + ATP = L-aspartyl-tRNA(Asp) + AMP + diphosphate</text>
        <dbReference type="Rhea" id="RHEA:19649"/>
        <dbReference type="Rhea" id="RHEA-COMP:9660"/>
        <dbReference type="Rhea" id="RHEA-COMP:9678"/>
        <dbReference type="ChEBI" id="CHEBI:29991"/>
        <dbReference type="ChEBI" id="CHEBI:30616"/>
        <dbReference type="ChEBI" id="CHEBI:33019"/>
        <dbReference type="ChEBI" id="CHEBI:78442"/>
        <dbReference type="ChEBI" id="CHEBI:78516"/>
        <dbReference type="ChEBI" id="CHEBI:456215"/>
        <dbReference type="EC" id="6.1.1.12"/>
    </reaction>
</comment>
<comment type="subunit">
    <text evidence="2">Homodimer.</text>
</comment>
<comment type="subcellular location">
    <subcellularLocation>
        <location evidence="2">Mitochondrion matrix</location>
    </subcellularLocation>
    <subcellularLocation>
        <location evidence="2">Mitochondrion membrane</location>
    </subcellularLocation>
</comment>
<comment type="similarity">
    <text evidence="4">Belongs to the class-II aminoacyl-tRNA synthetase family. Type 1 subfamily.</text>
</comment>
<gene>
    <name type="primary">Dars2</name>
</gene>
<dbReference type="EC" id="6.1.1.12" evidence="2"/>
<dbReference type="EMBL" id="BC105774">
    <property type="protein sequence ID" value="AAI05775.1"/>
    <property type="molecule type" value="mRNA"/>
</dbReference>
<dbReference type="RefSeq" id="NP_001029315.1">
    <property type="nucleotide sequence ID" value="NM_001034143.2"/>
</dbReference>
<dbReference type="SMR" id="Q3KRD0"/>
<dbReference type="FunCoup" id="Q3KRD0">
    <property type="interactions" value="2468"/>
</dbReference>
<dbReference type="IntAct" id="Q3KRD0">
    <property type="interactions" value="1"/>
</dbReference>
<dbReference type="STRING" id="10116.ENSRNOP00000003828"/>
<dbReference type="GlyGen" id="Q3KRD0">
    <property type="glycosylation" value="1 site"/>
</dbReference>
<dbReference type="iPTMnet" id="Q3KRD0"/>
<dbReference type="PhosphoSitePlus" id="Q3KRD0"/>
<dbReference type="PaxDb" id="10116-ENSRNOP00000003828"/>
<dbReference type="Ensembl" id="ENSRNOT00000003828.7">
    <property type="protein sequence ID" value="ENSRNOP00000003828.5"/>
    <property type="gene ID" value="ENSRNOG00000002813.7"/>
</dbReference>
<dbReference type="GeneID" id="304919"/>
<dbReference type="KEGG" id="rno:304919"/>
<dbReference type="UCSC" id="RGD:1308286">
    <property type="organism name" value="rat"/>
</dbReference>
<dbReference type="AGR" id="RGD:1308286"/>
<dbReference type="CTD" id="55157"/>
<dbReference type="RGD" id="1308286">
    <property type="gene designation" value="Dars2"/>
</dbReference>
<dbReference type="eggNOG" id="KOG2411">
    <property type="taxonomic scope" value="Eukaryota"/>
</dbReference>
<dbReference type="GeneTree" id="ENSGT01030000234618"/>
<dbReference type="HOGENOM" id="CLU_014330_3_1_1"/>
<dbReference type="InParanoid" id="Q3KRD0"/>
<dbReference type="OMA" id="LCGWVDR"/>
<dbReference type="OrthoDB" id="50896at9989"/>
<dbReference type="PhylomeDB" id="Q3KRD0"/>
<dbReference type="TreeFam" id="TF314827"/>
<dbReference type="PRO" id="PR:Q3KRD0"/>
<dbReference type="Proteomes" id="UP000002494">
    <property type="component" value="Chromosome 13"/>
</dbReference>
<dbReference type="Bgee" id="ENSRNOG00000002813">
    <property type="expression patterns" value="Expressed in heart and 19 other cell types or tissues"/>
</dbReference>
<dbReference type="GO" id="GO:0005759">
    <property type="term" value="C:mitochondrial matrix"/>
    <property type="evidence" value="ECO:0000250"/>
    <property type="project" value="UniProtKB"/>
</dbReference>
<dbReference type="GO" id="GO:0031966">
    <property type="term" value="C:mitochondrial membrane"/>
    <property type="evidence" value="ECO:0000250"/>
    <property type="project" value="UniProtKB"/>
</dbReference>
<dbReference type="GO" id="GO:0005739">
    <property type="term" value="C:mitochondrion"/>
    <property type="evidence" value="ECO:0000318"/>
    <property type="project" value="GO_Central"/>
</dbReference>
<dbReference type="GO" id="GO:0005654">
    <property type="term" value="C:nucleoplasm"/>
    <property type="evidence" value="ECO:0007669"/>
    <property type="project" value="Ensembl"/>
</dbReference>
<dbReference type="GO" id="GO:0004815">
    <property type="term" value="F:aspartate-tRNA ligase activity"/>
    <property type="evidence" value="ECO:0000250"/>
    <property type="project" value="UniProtKB"/>
</dbReference>
<dbReference type="GO" id="GO:0050560">
    <property type="term" value="F:aspartate-tRNA(Asn) ligase activity"/>
    <property type="evidence" value="ECO:0000266"/>
    <property type="project" value="RGD"/>
</dbReference>
<dbReference type="GO" id="GO:0005524">
    <property type="term" value="F:ATP binding"/>
    <property type="evidence" value="ECO:0007669"/>
    <property type="project" value="UniProtKB-KW"/>
</dbReference>
<dbReference type="GO" id="GO:0003676">
    <property type="term" value="F:nucleic acid binding"/>
    <property type="evidence" value="ECO:0007669"/>
    <property type="project" value="InterPro"/>
</dbReference>
<dbReference type="GO" id="GO:0042803">
    <property type="term" value="F:protein homodimerization activity"/>
    <property type="evidence" value="ECO:0000266"/>
    <property type="project" value="RGD"/>
</dbReference>
<dbReference type="GO" id="GO:0006422">
    <property type="term" value="P:aspartyl-tRNA aminoacylation"/>
    <property type="evidence" value="ECO:0000318"/>
    <property type="project" value="GO_Central"/>
</dbReference>
<dbReference type="GO" id="GO:0070145">
    <property type="term" value="P:mitochondrial asparaginyl-tRNA aminoacylation"/>
    <property type="evidence" value="ECO:0000250"/>
    <property type="project" value="UniProtKB"/>
</dbReference>
<dbReference type="GO" id="GO:0043039">
    <property type="term" value="P:tRNA aminoacylation"/>
    <property type="evidence" value="ECO:0000266"/>
    <property type="project" value="RGD"/>
</dbReference>
<dbReference type="CDD" id="cd00777">
    <property type="entry name" value="AspRS_core"/>
    <property type="match status" value="1"/>
</dbReference>
<dbReference type="CDD" id="cd04317">
    <property type="entry name" value="EcAspRS_like_N"/>
    <property type="match status" value="1"/>
</dbReference>
<dbReference type="FunFam" id="3.30.1360.30:FF:000002">
    <property type="entry name" value="Aspartate--tRNA ligase, mitochondrial"/>
    <property type="match status" value="1"/>
</dbReference>
<dbReference type="Gene3D" id="3.30.930.10">
    <property type="entry name" value="Bira Bifunctional Protein, Domain 2"/>
    <property type="match status" value="1"/>
</dbReference>
<dbReference type="Gene3D" id="3.30.1360.30">
    <property type="entry name" value="GAD-like domain"/>
    <property type="match status" value="1"/>
</dbReference>
<dbReference type="Gene3D" id="2.40.50.140">
    <property type="entry name" value="Nucleic acid-binding proteins"/>
    <property type="match status" value="1"/>
</dbReference>
<dbReference type="HAMAP" id="MF_00044">
    <property type="entry name" value="Asp_tRNA_synth_type1"/>
    <property type="match status" value="1"/>
</dbReference>
<dbReference type="InterPro" id="IPR004364">
    <property type="entry name" value="Aa-tRNA-synt_II"/>
</dbReference>
<dbReference type="InterPro" id="IPR006195">
    <property type="entry name" value="aa-tRNA-synth_II"/>
</dbReference>
<dbReference type="InterPro" id="IPR045864">
    <property type="entry name" value="aa-tRNA-synth_II/BPL/LPL"/>
</dbReference>
<dbReference type="InterPro" id="IPR004524">
    <property type="entry name" value="Asp-tRNA-ligase_1"/>
</dbReference>
<dbReference type="InterPro" id="IPR047089">
    <property type="entry name" value="Asp-tRNA-ligase_1_N"/>
</dbReference>
<dbReference type="InterPro" id="IPR002312">
    <property type="entry name" value="Asp/Asn-tRNA-synth_IIb"/>
</dbReference>
<dbReference type="InterPro" id="IPR047090">
    <property type="entry name" value="AspRS_core"/>
</dbReference>
<dbReference type="InterPro" id="IPR004115">
    <property type="entry name" value="GAD-like_sf"/>
</dbReference>
<dbReference type="InterPro" id="IPR029351">
    <property type="entry name" value="GAD_dom"/>
</dbReference>
<dbReference type="InterPro" id="IPR012340">
    <property type="entry name" value="NA-bd_OB-fold"/>
</dbReference>
<dbReference type="InterPro" id="IPR004365">
    <property type="entry name" value="NA-bd_OB_tRNA"/>
</dbReference>
<dbReference type="NCBIfam" id="TIGR00459">
    <property type="entry name" value="aspS_bact"/>
    <property type="match status" value="1"/>
</dbReference>
<dbReference type="NCBIfam" id="NF001750">
    <property type="entry name" value="PRK00476.1"/>
    <property type="match status" value="1"/>
</dbReference>
<dbReference type="PANTHER" id="PTHR22594:SF5">
    <property type="entry name" value="ASPARTATE--TRNA LIGASE, MITOCHONDRIAL"/>
    <property type="match status" value="1"/>
</dbReference>
<dbReference type="PANTHER" id="PTHR22594">
    <property type="entry name" value="ASPARTYL/LYSYL-TRNA SYNTHETASE"/>
    <property type="match status" value="1"/>
</dbReference>
<dbReference type="Pfam" id="PF02938">
    <property type="entry name" value="GAD"/>
    <property type="match status" value="1"/>
</dbReference>
<dbReference type="Pfam" id="PF00152">
    <property type="entry name" value="tRNA-synt_2"/>
    <property type="match status" value="1"/>
</dbReference>
<dbReference type="Pfam" id="PF01336">
    <property type="entry name" value="tRNA_anti-codon"/>
    <property type="match status" value="1"/>
</dbReference>
<dbReference type="PRINTS" id="PR01042">
    <property type="entry name" value="TRNASYNTHASP"/>
</dbReference>
<dbReference type="SUPFAM" id="SSF55681">
    <property type="entry name" value="Class II aaRS and biotin synthetases"/>
    <property type="match status" value="1"/>
</dbReference>
<dbReference type="SUPFAM" id="SSF55261">
    <property type="entry name" value="GAD domain-like"/>
    <property type="match status" value="1"/>
</dbReference>
<dbReference type="SUPFAM" id="SSF50249">
    <property type="entry name" value="Nucleic acid-binding proteins"/>
    <property type="match status" value="1"/>
</dbReference>
<dbReference type="PROSITE" id="PS50862">
    <property type="entry name" value="AA_TRNA_LIGASE_II"/>
    <property type="match status" value="1"/>
</dbReference>
<protein>
    <recommendedName>
        <fullName>Aspartate--tRNA ligase, mitochondrial</fullName>
        <ecNumber evidence="2">6.1.1.12</ecNumber>
    </recommendedName>
    <alternativeName>
        <fullName>Aspartyl-tRNA synthetase</fullName>
        <shortName>AspRS</shortName>
    </alternativeName>
</protein>
<proteinExistence type="evidence at protein level"/>
<reference key="1">
    <citation type="journal article" date="2004" name="Genome Res.">
        <title>The status, quality, and expansion of the NIH full-length cDNA project: the Mammalian Gene Collection (MGC).</title>
        <authorList>
            <consortium name="The MGC Project Team"/>
        </authorList>
    </citation>
    <scope>NUCLEOTIDE SEQUENCE [LARGE SCALE MRNA]</scope>
    <source>
        <tissue>Prostate</tissue>
    </source>
</reference>
<reference key="2">
    <citation type="journal article" date="2006" name="Proc. Natl. Acad. Sci. U.S.A.">
        <title>Quantitative phosphoproteomics of vasopressin-sensitive renal cells: regulation of aquaporin-2 phosphorylation at two sites.</title>
        <authorList>
            <person name="Hoffert J.D."/>
            <person name="Pisitkun T."/>
            <person name="Wang G."/>
            <person name="Shen R.-F."/>
            <person name="Knepper M.A."/>
        </authorList>
    </citation>
    <scope>PHOSPHORYLATION [LARGE SCALE ANALYSIS] AT THR-218</scope>
    <scope>IDENTIFICATION BY MASS SPECTROMETRY [LARGE SCALE ANALYSIS]</scope>
</reference>
<keyword id="KW-0030">Aminoacyl-tRNA synthetase</keyword>
<keyword id="KW-0067">ATP-binding</keyword>
<keyword id="KW-0436">Ligase</keyword>
<keyword id="KW-0472">Membrane</keyword>
<keyword id="KW-0496">Mitochondrion</keyword>
<keyword id="KW-0547">Nucleotide-binding</keyword>
<keyword id="KW-0597">Phosphoprotein</keyword>
<keyword id="KW-0648">Protein biosynthesis</keyword>
<keyword id="KW-1185">Reference proteome</keyword>
<keyword id="KW-0809">Transit peptide</keyword>
<sequence length="652" mass="73953">MYLGSWLNRLGRGLSRPIGKTKQPIWGSLSRSLTLSSQRVPEFSSFVARTNTCGELRSSHLGQEVTLCGWIQYRRQNTFLVLRDCHGLVQILIPQDESAASVRRTLCEAPVESVVRVSGTVIARPLGQENPKMPTGEIEIKAKTAELLNACKKLPFEIKDFVKKTEALRLQYRYLDLRSSQMQHNLRLRSQMVMKMREYLCTLHGFVDIETPTLFKRTPGGAKEFLVPSREPGRFYSLPQSPQQFKQLLMVGGLDRYFQVARCYRDEGSRPDRQPEFTQIDIEMSFVDQTGIQHLVEGLLHYSWPEDKDPLVAPFPSMTFAEALATYGTDKPDTRFGMKIVDISDVFRNTEIRFLQDALAKPQGTVKAICVHEGAKYLRKEDIEFIRKFAAHHFSQEVLPIFLNARKNWSSPFAKFITEEERLELTRLMEIQEDDMVLLTAGQHEKACSLLGKLRLECADLLETRGLALRDPALFSFLWVLDFPLFLAKEESPTELESAHHPFTAPHPGDIHLLYTEPEKVRGQHYDLVLNGNEIGGGSIRIHDAQLQRYILETLLKEDVKLLSHLLQALDYGAPPHGGIALGLDRLVCLVTGAPSIRDVIAFPKSYRGHDLMSNAPDTVSPEDLKPYHIHVSWPTDSEERASATPSKYLSS</sequence>
<organism>
    <name type="scientific">Rattus norvegicus</name>
    <name type="common">Rat</name>
    <dbReference type="NCBI Taxonomy" id="10116"/>
    <lineage>
        <taxon>Eukaryota</taxon>
        <taxon>Metazoa</taxon>
        <taxon>Chordata</taxon>
        <taxon>Craniata</taxon>
        <taxon>Vertebrata</taxon>
        <taxon>Euteleostomi</taxon>
        <taxon>Mammalia</taxon>
        <taxon>Eutheria</taxon>
        <taxon>Euarchontoglires</taxon>
        <taxon>Glires</taxon>
        <taxon>Rodentia</taxon>
        <taxon>Myomorpha</taxon>
        <taxon>Muroidea</taxon>
        <taxon>Muridae</taxon>
        <taxon>Murinae</taxon>
        <taxon>Rattus</taxon>
    </lineage>
</organism>
<name>SYDM_RAT</name>